<name>AUSO_ASPCI</name>
<feature type="chain" id="PRO_0000453862" description="Iron/alpha-ketoglutarate-dependent dioxygenase ausO">
    <location>
        <begin position="1"/>
        <end position="298"/>
    </location>
</feature>
<feature type="binding site" evidence="2">
    <location>
        <position position="130"/>
    </location>
    <ligand>
        <name>Fe cation</name>
        <dbReference type="ChEBI" id="CHEBI:24875"/>
    </ligand>
</feature>
<feature type="binding site" evidence="2">
    <location>
        <position position="132"/>
    </location>
    <ligand>
        <name>Fe cation</name>
        <dbReference type="ChEBI" id="CHEBI:24875"/>
    </ligand>
</feature>
<feature type="binding site" evidence="2">
    <location>
        <position position="211"/>
    </location>
    <ligand>
        <name>Fe cation</name>
        <dbReference type="ChEBI" id="CHEBI:24875"/>
    </ligand>
</feature>
<comment type="function">
    <text evidence="3 4 5">Iron/alpha-ketoglutarate-dependent dioxygenase; part of the gene cluster that mediates the biosynthesis of calidodehydroaustin, a fungal meroterpenoid (PubMed:28233494, PubMed:29076725). The first step of the pathway is the synthesis of 3,5-dimethylorsellinic acid by the polyketide synthase ausA (PubMed:28233494). 3,5-dimethylorsellinic acid is then prenylated by the polyprenyl transferase ausN (PubMed:28233494). Further epoxidation by the FAD-dependent monooxygenase ausM and cyclization by the probable terpene cyclase ausL lead to the formation of protoaustinoid A (By similarity). Protoaustinoid A is then oxidized to spiro-lactone preaustinoid A3 by the combined action of the FAD-binding monooxygenases ausB and ausC, and the dioxygenase ausE (By similarity). Acid-catalyzed keto-rearrangement and ring contraction of the tetraketide portion of preaustinoid A3 by ausJ lead to the formation of preaustinoid A4 (By similarity). The aldo-keto reductase ausK, with the help of ausH, is involved in the next step by transforming preaustinoid A4 into isoaustinone which is in turn hydroxylated by the P450 monooxygenase ausI to form austinolide (By similarity). The cytochrome P450 monooxygenase ausG modifies austinolide to austinol (By similarity). Austinol is further acetylated to austin by the O-acetyltransferase ausP, which spontaneously changes to dehydroaustin (PubMed:28233494). The cytochrome P450 monooxygenase ausR then converts dehydroaustin is into 7-dehydrodehydroaustin (PubMed:28233494). The hydroxylation catalyzed by ausR permits the O-acetyltransferase ausQ to add an additional acetyl group to the molecule, leading to the formation of acetoxydehydroaustin (PubMed:28233494). The short chain dehydrogenase ausT catalyzes the reduction of the double bond present between carbon atoms 1 and 2 to convert 7-dehydrodehydroaustin into 1,2-dihydro-7-hydroxydehydroaustin (PubMed:28233494). AusQ catalyzes not only an acetylation reaction but also the addition of the PKS ausV diketide product to 1,2-dihydro-7-hydroxydehydroaustin, forming precalidodehydroaustin (PubMed:28233494). Finally, the iron/alpha-ketoglutarate-dependent dioxygenase converts precalidodehydroaustin into calidodehydroaustin (PubMed:28233494).</text>
</comment>
<comment type="cofactor">
    <cofactor evidence="2">
        <name>Fe cation</name>
        <dbReference type="ChEBI" id="CHEBI:24875"/>
    </cofactor>
</comment>
<comment type="pathway">
    <text evidence="4">Secondary metabolite biosynthesis; terpenoid biosynthesis.</text>
</comment>
<comment type="subunit">
    <text evidence="1">Homodimer.</text>
</comment>
<comment type="miscellaneous">
    <text evidence="8">In A.calidoustus, the austinoid gene cluster lies on a contiguous DNA region, while clusters from E.nidulans and P.brasilianum are split in their respective genomes. Genetic rearrangements provoked variability among the clusters and E.nidulans produces the least number of austionoid derivatives with the end products austinol and dehydroaustinol, while P.brasilianum can produce until acetoxydehydroaustin, and A.calidoustus produces the highest number of identified derivatives.</text>
</comment>
<comment type="similarity">
    <text evidence="7">Belongs to the PhyH family.</text>
</comment>
<accession>A0A0U5GFR4</accession>
<evidence type="ECO:0000250" key="1">
    <source>
        <dbReference type="UniProtKB" id="Q4WAW9"/>
    </source>
</evidence>
<evidence type="ECO:0000250" key="2">
    <source>
        <dbReference type="UniProtKB" id="Q5AR53"/>
    </source>
</evidence>
<evidence type="ECO:0000250" key="3">
    <source>
        <dbReference type="UniProtKB" id="Q5ATJ7"/>
    </source>
</evidence>
<evidence type="ECO:0000269" key="4">
    <source>
    </source>
</evidence>
<evidence type="ECO:0000269" key="5">
    <source>
    </source>
</evidence>
<evidence type="ECO:0000303" key="6">
    <source>
    </source>
</evidence>
<evidence type="ECO:0000305" key="7"/>
<evidence type="ECO:0000305" key="8">
    <source>
    </source>
</evidence>
<evidence type="ECO:0000312" key="9">
    <source>
        <dbReference type="EMBL" id="CEL11250.1"/>
    </source>
</evidence>
<protein>
    <recommendedName>
        <fullName evidence="6">Iron/alpha-ketoglutarate-dependent dioxygenase ausO</fullName>
        <ecNumber evidence="4">1.14.-.-</ecNumber>
    </recommendedName>
    <alternativeName>
        <fullName evidence="6">Austinoid biosynthesis cluster protein O</fullName>
    </alternativeName>
</protein>
<sequence length="298" mass="32876">MKIPDNPQIQRFPATTPAPTLWKAVADDGVAIVTNAIPIDTIQRFHADIDNTGHATYLEDYKAFKDKEFPVQAKHASNLVRTSPVFRHEILNTPLIHEICTAAFQHLGDYWLTSSIFRSTNPGNPAQDFHRDALFHPLLQYQSPSAPHLTVSLIIPTTPFTKANGATRVILGSHKWENMTPQNIDALSKDDSVHAEMNAGDIMILHQRTIHAGGEHLPEAKDTRRLLLLLFTSCQLAQLESALALPRPLVESLTPLAQKMVGWRTVKPAGVNVVGLNTYHTGTLEDGLGLRSNQTMAG</sequence>
<gene>
    <name evidence="6" type="primary">ausO</name>
    <name evidence="9" type="ORF">ASPCAL14353</name>
</gene>
<organism>
    <name type="scientific">Aspergillus calidoustus</name>
    <dbReference type="NCBI Taxonomy" id="454130"/>
    <lineage>
        <taxon>Eukaryota</taxon>
        <taxon>Fungi</taxon>
        <taxon>Dikarya</taxon>
        <taxon>Ascomycota</taxon>
        <taxon>Pezizomycotina</taxon>
        <taxon>Eurotiomycetes</taxon>
        <taxon>Eurotiomycetidae</taxon>
        <taxon>Eurotiales</taxon>
        <taxon>Aspergillaceae</taxon>
        <taxon>Aspergillus</taxon>
        <taxon>Aspergillus subgen. Nidulantes</taxon>
    </lineage>
</organism>
<keyword id="KW-0223">Dioxygenase</keyword>
<keyword id="KW-0408">Iron</keyword>
<keyword id="KW-0479">Metal-binding</keyword>
<keyword id="KW-0560">Oxidoreductase</keyword>
<keyword id="KW-1185">Reference proteome</keyword>
<proteinExistence type="inferred from homology"/>
<reference key="1">
    <citation type="journal article" date="2016" name="Genome Announc.">
        <title>Draft genome sequences of fungus Aspergillus calidoustus.</title>
        <authorList>
            <person name="Horn F."/>
            <person name="Linde J."/>
            <person name="Mattern D.J."/>
            <person name="Walther G."/>
            <person name="Guthke R."/>
            <person name="Scherlach K."/>
            <person name="Martin K."/>
            <person name="Brakhage A.A."/>
            <person name="Petzke L."/>
            <person name="Valiante V."/>
        </authorList>
    </citation>
    <scope>NUCLEOTIDE SEQUENCE [LARGE SCALE GENOMIC DNA]</scope>
    <source>
        <strain>SF006504</strain>
    </source>
</reference>
<reference key="2">
    <citation type="journal article" date="2017" name="ACS Chem. Biol.">
        <title>Discovery of an Extended Austinoid Biosynthetic Pathway in Aspergillus calidoustus.</title>
        <authorList>
            <person name="Valiante V."/>
            <person name="Mattern D.J."/>
            <person name="Schueffler A."/>
            <person name="Horn F."/>
            <person name="Walther G."/>
            <person name="Scherlach K."/>
            <person name="Petzke L."/>
            <person name="Dickhaut J."/>
            <person name="Guthke R."/>
            <person name="Hertweck C."/>
            <person name="Nett M."/>
            <person name="Thines E."/>
            <person name="Brakhage A.A."/>
        </authorList>
    </citation>
    <scope>FUNCTION</scope>
    <scope>PATHWAY</scope>
</reference>
<reference key="3">
    <citation type="journal article" date="2017" name="ACS Chem. Biol.">
        <title>Rewiring of the austinoid biosynthetic pathway in filamentous fungi.</title>
        <authorList>
            <person name="Mattern D.J."/>
            <person name="Valiante V."/>
            <person name="Horn F."/>
            <person name="Petzke L."/>
            <person name="Brakhage A.A."/>
        </authorList>
    </citation>
    <scope>FUNCTION</scope>
</reference>
<dbReference type="EC" id="1.14.-.-" evidence="4"/>
<dbReference type="EMBL" id="CDMC01000024">
    <property type="protein sequence ID" value="CEL11250.1"/>
    <property type="molecule type" value="Genomic_DNA"/>
</dbReference>
<dbReference type="SMR" id="A0A0U5GFR4"/>
<dbReference type="STRING" id="454130.A0A0U5GFR4"/>
<dbReference type="OrthoDB" id="445007at2759"/>
<dbReference type="UniPathway" id="UPA00213"/>
<dbReference type="Proteomes" id="UP000054771">
    <property type="component" value="Unassembled WGS sequence"/>
</dbReference>
<dbReference type="GO" id="GO:0051213">
    <property type="term" value="F:dioxygenase activity"/>
    <property type="evidence" value="ECO:0007669"/>
    <property type="project" value="UniProtKB-KW"/>
</dbReference>
<dbReference type="GO" id="GO:0046872">
    <property type="term" value="F:metal ion binding"/>
    <property type="evidence" value="ECO:0007669"/>
    <property type="project" value="UniProtKB-KW"/>
</dbReference>
<dbReference type="GO" id="GO:0016114">
    <property type="term" value="P:terpenoid biosynthetic process"/>
    <property type="evidence" value="ECO:0007669"/>
    <property type="project" value="UniProtKB-UniPathway"/>
</dbReference>
<dbReference type="Gene3D" id="2.60.120.620">
    <property type="entry name" value="q2cbj1_9rhob like domain"/>
    <property type="match status" value="1"/>
</dbReference>
<dbReference type="InterPro" id="IPR008775">
    <property type="entry name" value="Phytyl_CoA_dOase-like"/>
</dbReference>
<dbReference type="PANTHER" id="PTHR20883:SF41">
    <property type="entry name" value="IRON_ALPHA-KETOGLUTARATE-DEPENDENT DIOXYGENASE ASQJ"/>
    <property type="match status" value="1"/>
</dbReference>
<dbReference type="PANTHER" id="PTHR20883">
    <property type="entry name" value="PHYTANOYL-COA DIOXYGENASE DOMAIN CONTAINING 1"/>
    <property type="match status" value="1"/>
</dbReference>
<dbReference type="Pfam" id="PF05721">
    <property type="entry name" value="PhyH"/>
    <property type="match status" value="1"/>
</dbReference>
<dbReference type="SUPFAM" id="SSF51197">
    <property type="entry name" value="Clavaminate synthase-like"/>
    <property type="match status" value="1"/>
</dbReference>